<feature type="chain" id="PRO_0000245910" description="FMN-dependent NADH:quinone oxidoreductase">
    <location>
        <begin position="1"/>
        <end position="198"/>
    </location>
</feature>
<feature type="binding site" evidence="1">
    <location>
        <begin position="96"/>
        <end position="99"/>
    </location>
    <ligand>
        <name>FMN</name>
        <dbReference type="ChEBI" id="CHEBI:58210"/>
    </ligand>
</feature>
<sequence>MTTILQINSAARSQGAQSTMLADELTAKLQQGNPGATVKVRSLLADALPHLDDAVLGAFFTPAEQRSAEQNAIVAKSDALIDELRSADVIVIGAPMYNFGVSSQLKTYFDWIARAGVTFRYTAQGPEGLLKGKKVYVVSARGGKHVGMPTDSQTPFLTTFLGFIGMTDVTFVYAEGLALGPDAASEALASAREAIAAV</sequence>
<evidence type="ECO:0000255" key="1">
    <source>
        <dbReference type="HAMAP-Rule" id="MF_01216"/>
    </source>
</evidence>
<name>AZOR_BURTA</name>
<reference key="1">
    <citation type="journal article" date="2005" name="BMC Genomics">
        <title>Bacterial genome adaptation to niches: divergence of the potential virulence genes in three Burkholderia species of different survival strategies.</title>
        <authorList>
            <person name="Kim H.S."/>
            <person name="Schell M.A."/>
            <person name="Yu Y."/>
            <person name="Ulrich R.L."/>
            <person name="Sarria S.H."/>
            <person name="Nierman W.C."/>
            <person name="DeShazer D."/>
        </authorList>
    </citation>
    <scope>NUCLEOTIDE SEQUENCE [LARGE SCALE GENOMIC DNA]</scope>
    <source>
        <strain>ATCC 700388 / DSM 13276 / CCUG 48851 / CIP 106301 / E264</strain>
    </source>
</reference>
<comment type="function">
    <text evidence="1">Quinone reductase that provides resistance to thiol-specific stress caused by electrophilic quinones.</text>
</comment>
<comment type="function">
    <text evidence="1">Also exhibits azoreductase activity. Catalyzes the reductive cleavage of the azo bond in aromatic azo compounds to the corresponding amines.</text>
</comment>
<comment type="catalytic activity">
    <reaction evidence="1">
        <text>2 a quinone + NADH + H(+) = 2 a 1,4-benzosemiquinone + NAD(+)</text>
        <dbReference type="Rhea" id="RHEA:65952"/>
        <dbReference type="ChEBI" id="CHEBI:15378"/>
        <dbReference type="ChEBI" id="CHEBI:57540"/>
        <dbReference type="ChEBI" id="CHEBI:57945"/>
        <dbReference type="ChEBI" id="CHEBI:132124"/>
        <dbReference type="ChEBI" id="CHEBI:134225"/>
    </reaction>
</comment>
<comment type="catalytic activity">
    <reaction evidence="1">
        <text>N,N-dimethyl-1,4-phenylenediamine + anthranilate + 2 NAD(+) = 2-(4-dimethylaminophenyl)diazenylbenzoate + 2 NADH + 2 H(+)</text>
        <dbReference type="Rhea" id="RHEA:55872"/>
        <dbReference type="ChEBI" id="CHEBI:15378"/>
        <dbReference type="ChEBI" id="CHEBI:15783"/>
        <dbReference type="ChEBI" id="CHEBI:16567"/>
        <dbReference type="ChEBI" id="CHEBI:57540"/>
        <dbReference type="ChEBI" id="CHEBI:57945"/>
        <dbReference type="ChEBI" id="CHEBI:71579"/>
        <dbReference type="EC" id="1.7.1.17"/>
    </reaction>
</comment>
<comment type="cofactor">
    <cofactor evidence="1">
        <name>FMN</name>
        <dbReference type="ChEBI" id="CHEBI:58210"/>
    </cofactor>
    <text evidence="1">Binds 1 FMN per subunit.</text>
</comment>
<comment type="subunit">
    <text evidence="1">Homodimer.</text>
</comment>
<comment type="similarity">
    <text evidence="1">Belongs to the azoreductase type 1 family.</text>
</comment>
<gene>
    <name evidence="1" type="primary">azoR</name>
    <name type="ordered locus">BTH_I2915</name>
</gene>
<proteinExistence type="inferred from homology"/>
<organism>
    <name type="scientific">Burkholderia thailandensis (strain ATCC 700388 / DSM 13276 / CCUG 48851 / CIP 106301 / E264)</name>
    <dbReference type="NCBI Taxonomy" id="271848"/>
    <lineage>
        <taxon>Bacteria</taxon>
        <taxon>Pseudomonadati</taxon>
        <taxon>Pseudomonadota</taxon>
        <taxon>Betaproteobacteria</taxon>
        <taxon>Burkholderiales</taxon>
        <taxon>Burkholderiaceae</taxon>
        <taxon>Burkholderia</taxon>
        <taxon>pseudomallei group</taxon>
    </lineage>
</organism>
<protein>
    <recommendedName>
        <fullName evidence="1">FMN-dependent NADH:quinone oxidoreductase</fullName>
        <ecNumber evidence="1">1.6.5.-</ecNumber>
    </recommendedName>
    <alternativeName>
        <fullName evidence="1">Azo-dye reductase</fullName>
    </alternativeName>
    <alternativeName>
        <fullName evidence="1">FMN-dependent NADH-azo compound oxidoreductase</fullName>
    </alternativeName>
    <alternativeName>
        <fullName evidence="1">FMN-dependent NADH-azoreductase</fullName>
        <ecNumber evidence="1">1.7.1.17</ecNumber>
    </alternativeName>
</protein>
<keyword id="KW-0285">Flavoprotein</keyword>
<keyword id="KW-0288">FMN</keyword>
<keyword id="KW-0520">NAD</keyword>
<keyword id="KW-0560">Oxidoreductase</keyword>
<dbReference type="EC" id="1.6.5.-" evidence="1"/>
<dbReference type="EC" id="1.7.1.17" evidence="1"/>
<dbReference type="EMBL" id="CP000086">
    <property type="protein sequence ID" value="ABC38097.1"/>
    <property type="molecule type" value="Genomic_DNA"/>
</dbReference>
<dbReference type="RefSeq" id="WP_011402536.1">
    <property type="nucleotide sequence ID" value="NZ_CP008786.1"/>
</dbReference>
<dbReference type="SMR" id="Q2SUH7"/>
<dbReference type="GeneID" id="45122605"/>
<dbReference type="KEGG" id="bte:BTH_I2915"/>
<dbReference type="HOGENOM" id="CLU_088964_0_0_4"/>
<dbReference type="Proteomes" id="UP000001930">
    <property type="component" value="Chromosome I"/>
</dbReference>
<dbReference type="GO" id="GO:0009055">
    <property type="term" value="F:electron transfer activity"/>
    <property type="evidence" value="ECO:0007669"/>
    <property type="project" value="UniProtKB-UniRule"/>
</dbReference>
<dbReference type="GO" id="GO:0010181">
    <property type="term" value="F:FMN binding"/>
    <property type="evidence" value="ECO:0007669"/>
    <property type="project" value="UniProtKB-UniRule"/>
</dbReference>
<dbReference type="GO" id="GO:0016652">
    <property type="term" value="F:oxidoreductase activity, acting on NAD(P)H as acceptor"/>
    <property type="evidence" value="ECO:0007669"/>
    <property type="project" value="UniProtKB-UniRule"/>
</dbReference>
<dbReference type="GO" id="GO:0016655">
    <property type="term" value="F:oxidoreductase activity, acting on NAD(P)H, quinone or similar compound as acceptor"/>
    <property type="evidence" value="ECO:0007669"/>
    <property type="project" value="InterPro"/>
</dbReference>
<dbReference type="Gene3D" id="3.40.50.360">
    <property type="match status" value="1"/>
</dbReference>
<dbReference type="HAMAP" id="MF_01216">
    <property type="entry name" value="Azoreductase_type1"/>
    <property type="match status" value="1"/>
</dbReference>
<dbReference type="InterPro" id="IPR003680">
    <property type="entry name" value="Flavodoxin_fold"/>
</dbReference>
<dbReference type="InterPro" id="IPR029039">
    <property type="entry name" value="Flavoprotein-like_sf"/>
</dbReference>
<dbReference type="InterPro" id="IPR050104">
    <property type="entry name" value="FMN-dep_NADH:Q_OxRdtase_AzoR1"/>
</dbReference>
<dbReference type="InterPro" id="IPR023048">
    <property type="entry name" value="NADH:quinone_OxRdtase_FMN_depd"/>
</dbReference>
<dbReference type="PANTHER" id="PTHR43741">
    <property type="entry name" value="FMN-DEPENDENT NADH-AZOREDUCTASE 1"/>
    <property type="match status" value="1"/>
</dbReference>
<dbReference type="PANTHER" id="PTHR43741:SF2">
    <property type="entry name" value="FMN-DEPENDENT NADH:QUINONE OXIDOREDUCTASE"/>
    <property type="match status" value="1"/>
</dbReference>
<dbReference type="Pfam" id="PF02525">
    <property type="entry name" value="Flavodoxin_2"/>
    <property type="match status" value="1"/>
</dbReference>
<dbReference type="SUPFAM" id="SSF52218">
    <property type="entry name" value="Flavoproteins"/>
    <property type="match status" value="1"/>
</dbReference>
<accession>Q2SUH7</accession>